<evidence type="ECO:0000255" key="1">
    <source>
        <dbReference type="HAMAP-Rule" id="MF_01039"/>
    </source>
</evidence>
<keyword id="KW-0312">Gluconeogenesis</keyword>
<keyword id="KW-0324">Glycolysis</keyword>
<keyword id="KW-0413">Isomerase</keyword>
<sequence length="245" mass="28361">MIKLVLIRHGQSLWNLENRFTGWTDVDLSENGLSEAREAGAILKKNGYTFDVAYTSVLKRAIRTLWIVLHEMNLSWVPVHKSWKLNERHYGALQGLNKDETAKKYGEEQVHIWRRSIDVRPPALTEDDPRYEMNDPRYKELKKGEFPLTECLVDTEKRVLNYWHSEIAPSLKSGEKVIISSHGNTIRSLVKYLDNLSSDGVVSLNIPTSIPLVYELDDDLRPIRHYYLSMDGEVPEGEFPKHIVF</sequence>
<gene>
    <name evidence="1" type="primary">gpmA</name>
    <name type="ordered locus">BCA_2573</name>
</gene>
<reference key="1">
    <citation type="submission" date="2009-02" db="EMBL/GenBank/DDBJ databases">
        <title>Genome sequence of Bacillus cereus 03BB102.</title>
        <authorList>
            <person name="Dodson R.J."/>
            <person name="Jackson P."/>
            <person name="Munk A.C."/>
            <person name="Brettin T."/>
            <person name="Bruce D."/>
            <person name="Detter C."/>
            <person name="Tapia R."/>
            <person name="Han C."/>
            <person name="Sutton G."/>
            <person name="Sims D."/>
        </authorList>
    </citation>
    <scope>NUCLEOTIDE SEQUENCE [LARGE SCALE GENOMIC DNA]</scope>
    <source>
        <strain>03BB102</strain>
    </source>
</reference>
<protein>
    <recommendedName>
        <fullName evidence="1">2,3-bisphosphoglycerate-dependent phosphoglycerate mutase</fullName>
        <shortName evidence="1">BPG-dependent PGAM</shortName>
        <shortName evidence="1">PGAM</shortName>
        <shortName evidence="1">Phosphoglyceromutase</shortName>
        <shortName evidence="1">dPGM</shortName>
        <ecNumber evidence="1">5.4.2.11</ecNumber>
    </recommendedName>
</protein>
<accession>C1EUQ5</accession>
<name>GPMA_BACC3</name>
<organism>
    <name type="scientific">Bacillus cereus (strain 03BB102)</name>
    <dbReference type="NCBI Taxonomy" id="572264"/>
    <lineage>
        <taxon>Bacteria</taxon>
        <taxon>Bacillati</taxon>
        <taxon>Bacillota</taxon>
        <taxon>Bacilli</taxon>
        <taxon>Bacillales</taxon>
        <taxon>Bacillaceae</taxon>
        <taxon>Bacillus</taxon>
        <taxon>Bacillus cereus group</taxon>
    </lineage>
</organism>
<feature type="chain" id="PRO_1000149500" description="2,3-bisphosphoglycerate-dependent phosphoglycerate mutase">
    <location>
        <begin position="1"/>
        <end position="245"/>
    </location>
</feature>
<feature type="active site" description="Tele-phosphohistidine intermediate" evidence="1">
    <location>
        <position position="9"/>
    </location>
</feature>
<feature type="active site" description="Proton donor/acceptor" evidence="1">
    <location>
        <position position="87"/>
    </location>
</feature>
<feature type="binding site" evidence="1">
    <location>
        <begin position="8"/>
        <end position="15"/>
    </location>
    <ligand>
        <name>substrate</name>
    </ligand>
</feature>
<feature type="binding site" evidence="1">
    <location>
        <begin position="21"/>
        <end position="22"/>
    </location>
    <ligand>
        <name>substrate</name>
    </ligand>
</feature>
<feature type="binding site" evidence="1">
    <location>
        <position position="60"/>
    </location>
    <ligand>
        <name>substrate</name>
    </ligand>
</feature>
<feature type="binding site" evidence="1">
    <location>
        <begin position="87"/>
        <end position="90"/>
    </location>
    <ligand>
        <name>substrate</name>
    </ligand>
</feature>
<feature type="binding site" evidence="1">
    <location>
        <position position="98"/>
    </location>
    <ligand>
        <name>substrate</name>
    </ligand>
</feature>
<feature type="binding site" evidence="1">
    <location>
        <begin position="114"/>
        <end position="115"/>
    </location>
    <ligand>
        <name>substrate</name>
    </ligand>
</feature>
<feature type="binding site" evidence="1">
    <location>
        <begin position="183"/>
        <end position="184"/>
    </location>
    <ligand>
        <name>substrate</name>
    </ligand>
</feature>
<feature type="site" description="Transition state stabilizer" evidence="1">
    <location>
        <position position="182"/>
    </location>
</feature>
<proteinExistence type="inferred from homology"/>
<comment type="function">
    <text evidence="1">Catalyzes the interconversion of 2-phosphoglycerate and 3-phosphoglycerate.</text>
</comment>
<comment type="catalytic activity">
    <reaction evidence="1">
        <text>(2R)-2-phosphoglycerate = (2R)-3-phosphoglycerate</text>
        <dbReference type="Rhea" id="RHEA:15901"/>
        <dbReference type="ChEBI" id="CHEBI:58272"/>
        <dbReference type="ChEBI" id="CHEBI:58289"/>
        <dbReference type="EC" id="5.4.2.11"/>
    </reaction>
</comment>
<comment type="pathway">
    <text evidence="1">Carbohydrate degradation; glycolysis; pyruvate from D-glyceraldehyde 3-phosphate: step 3/5.</text>
</comment>
<comment type="similarity">
    <text evidence="1">Belongs to the phosphoglycerate mutase family. BPG-dependent PGAM subfamily.</text>
</comment>
<dbReference type="EC" id="5.4.2.11" evidence="1"/>
<dbReference type="EMBL" id="CP001407">
    <property type="protein sequence ID" value="ACO30111.1"/>
    <property type="molecule type" value="Genomic_DNA"/>
</dbReference>
<dbReference type="RefSeq" id="WP_000594157.1">
    <property type="nucleotide sequence ID" value="NZ_CP009318.1"/>
</dbReference>
<dbReference type="SMR" id="C1EUQ5"/>
<dbReference type="KEGG" id="bcx:BCA_2573"/>
<dbReference type="PATRIC" id="fig|572264.18.peg.2522"/>
<dbReference type="UniPathway" id="UPA00109">
    <property type="reaction ID" value="UER00186"/>
</dbReference>
<dbReference type="Proteomes" id="UP000002210">
    <property type="component" value="Chromosome"/>
</dbReference>
<dbReference type="GO" id="GO:0004619">
    <property type="term" value="F:phosphoglycerate mutase activity"/>
    <property type="evidence" value="ECO:0007669"/>
    <property type="project" value="UniProtKB-EC"/>
</dbReference>
<dbReference type="GO" id="GO:0006094">
    <property type="term" value="P:gluconeogenesis"/>
    <property type="evidence" value="ECO:0007669"/>
    <property type="project" value="UniProtKB-UniRule"/>
</dbReference>
<dbReference type="GO" id="GO:0006096">
    <property type="term" value="P:glycolytic process"/>
    <property type="evidence" value="ECO:0007669"/>
    <property type="project" value="UniProtKB-UniRule"/>
</dbReference>
<dbReference type="CDD" id="cd07067">
    <property type="entry name" value="HP_PGM_like"/>
    <property type="match status" value="1"/>
</dbReference>
<dbReference type="FunFam" id="3.40.50.1240:FF:000003">
    <property type="entry name" value="2,3-bisphosphoglycerate-dependent phosphoglycerate mutase"/>
    <property type="match status" value="1"/>
</dbReference>
<dbReference type="Gene3D" id="3.40.50.1240">
    <property type="entry name" value="Phosphoglycerate mutase-like"/>
    <property type="match status" value="1"/>
</dbReference>
<dbReference type="HAMAP" id="MF_01039">
    <property type="entry name" value="PGAM_GpmA"/>
    <property type="match status" value="1"/>
</dbReference>
<dbReference type="InterPro" id="IPR013078">
    <property type="entry name" value="His_Pase_superF_clade-1"/>
</dbReference>
<dbReference type="InterPro" id="IPR029033">
    <property type="entry name" value="His_PPase_superfam"/>
</dbReference>
<dbReference type="InterPro" id="IPR001345">
    <property type="entry name" value="PG/BPGM_mutase_AS"/>
</dbReference>
<dbReference type="InterPro" id="IPR005952">
    <property type="entry name" value="Phosphogly_mut1"/>
</dbReference>
<dbReference type="NCBIfam" id="TIGR01258">
    <property type="entry name" value="pgm_1"/>
    <property type="match status" value="1"/>
</dbReference>
<dbReference type="NCBIfam" id="NF010713">
    <property type="entry name" value="PRK14115.1"/>
    <property type="match status" value="1"/>
</dbReference>
<dbReference type="PANTHER" id="PTHR11931">
    <property type="entry name" value="PHOSPHOGLYCERATE MUTASE"/>
    <property type="match status" value="1"/>
</dbReference>
<dbReference type="Pfam" id="PF00300">
    <property type="entry name" value="His_Phos_1"/>
    <property type="match status" value="1"/>
</dbReference>
<dbReference type="PIRSF" id="PIRSF000709">
    <property type="entry name" value="6PFK_2-Ptase"/>
    <property type="match status" value="1"/>
</dbReference>
<dbReference type="SMART" id="SM00855">
    <property type="entry name" value="PGAM"/>
    <property type="match status" value="1"/>
</dbReference>
<dbReference type="SUPFAM" id="SSF53254">
    <property type="entry name" value="Phosphoglycerate mutase-like"/>
    <property type="match status" value="1"/>
</dbReference>
<dbReference type="PROSITE" id="PS00175">
    <property type="entry name" value="PG_MUTASE"/>
    <property type="match status" value="1"/>
</dbReference>